<reference evidence="6 7" key="1">
    <citation type="journal article" date="2010" name="Microb. Ecol.">
        <title>Comparative genome analysis of Prevotella ruminicola and Prevotella bryantii: insights into their environmental niche.</title>
        <authorList>
            <person name="Purushe J."/>
            <person name="Fouts D.E."/>
            <person name="Morrison M."/>
            <person name="White B.A."/>
            <person name="Mackie R.I."/>
            <person name="Coutinho P.M."/>
            <person name="Henrissat B."/>
            <person name="Nelson K.E."/>
        </authorList>
    </citation>
    <scope>NUCLEOTIDE SEQUENCE [LARGE SCALE GENOMIC DNA]</scope>
    <source>
        <strain evidence="3">ATCC 19189 / DSM 19721 / CIP 105475 / JCM 8958 / 23</strain>
    </source>
</reference>
<reference evidence="6" key="2">
    <citation type="journal article" date="2011" name="Appl. Environ. Microbiol.">
        <title>Biochemical characterization and relative expression levels of multiple carbohydrate esterases of the xylanolytic rumen bacterium Prevotella ruminicola 23 grown on an ester-enriched substrate.</title>
        <authorList>
            <person name="Kabel M.A."/>
            <person name="Yeoman C.J."/>
            <person name="Han Y."/>
            <person name="Dodd D."/>
            <person name="Abbas C.A."/>
            <person name="de Bont J.A."/>
            <person name="Morrison M."/>
            <person name="Cann I.K."/>
            <person name="Mackie R.I."/>
        </authorList>
    </citation>
    <scope>FUNCTION</scope>
    <scope>BIOPHYSICOCHEMICAL PROPERTIES</scope>
    <scope>PATHWAY</scope>
    <scope>IDENTIFICATION BY MASS SPECTROMETRY</scope>
    <scope>SUBSTRATE SPECIFICITY</scope>
    <source>
        <strain evidence="4">ATCC 19189 / DSM 19721 / CIP 105475 / JCM 8958 / 23</strain>
    </source>
</reference>
<proteinExistence type="evidence at protein level"/>
<evidence type="ECO:0000250" key="1"/>
<evidence type="ECO:0000255" key="2"/>
<evidence type="ECO:0000269" key="3">
    <source>
    </source>
</evidence>
<evidence type="ECO:0000269" key="4">
    <source>
    </source>
</evidence>
<evidence type="ECO:0000303" key="5">
    <source>
    </source>
</evidence>
<evidence type="ECO:0000305" key="6"/>
<evidence type="ECO:0000312" key="7">
    <source>
        <dbReference type="EMBL" id="ADE82554.1"/>
    </source>
</evidence>
<feature type="signal peptide" evidence="2">
    <location>
        <begin position="1"/>
        <end position="31"/>
    </location>
</feature>
<feature type="chain" id="PRO_0000422403" description="Acetyl esterase Axe7A">
    <location>
        <begin position="32"/>
        <end position="439"/>
    </location>
</feature>
<feature type="active site" description="Nucleophile" evidence="1">
    <location>
        <position position="309"/>
    </location>
</feature>
<feature type="active site" description="Charge relay system" evidence="1">
    <location>
        <position position="391"/>
    </location>
</feature>
<feature type="active site" description="Charge relay system" evidence="1">
    <location>
        <position position="420"/>
    </location>
</feature>
<protein>
    <recommendedName>
        <fullName>Acetyl esterase Axe7A</fullName>
        <ecNumber evidence="4">3.1.1.-</ecNumber>
    </recommendedName>
</protein>
<dbReference type="EC" id="3.1.1.-" evidence="4"/>
<dbReference type="EMBL" id="CP002006">
    <property type="protein sequence ID" value="ADE82554.1"/>
    <property type="molecule type" value="Genomic_DNA"/>
</dbReference>
<dbReference type="RefSeq" id="WP_013064540.1">
    <property type="nucleotide sequence ID" value="NC_014033.1"/>
</dbReference>
<dbReference type="SMR" id="D5EXI2"/>
<dbReference type="STRING" id="264731.PRU_2678"/>
<dbReference type="ESTHER" id="prer2-d5exi2">
    <property type="family name" value="Acetyl-esterase_deacetylase"/>
</dbReference>
<dbReference type="GeneID" id="31502208"/>
<dbReference type="KEGG" id="pru:PRU_2678"/>
<dbReference type="eggNOG" id="COG3458">
    <property type="taxonomic scope" value="Bacteria"/>
</dbReference>
<dbReference type="HOGENOM" id="CLU_050843_0_0_10"/>
<dbReference type="UniPathway" id="UPA00114"/>
<dbReference type="Proteomes" id="UP000000927">
    <property type="component" value="Chromosome"/>
</dbReference>
<dbReference type="GO" id="GO:0052689">
    <property type="term" value="F:carboxylic ester hydrolase activity"/>
    <property type="evidence" value="ECO:0007669"/>
    <property type="project" value="UniProtKB-KW"/>
</dbReference>
<dbReference type="GO" id="GO:0045493">
    <property type="term" value="P:xylan catabolic process"/>
    <property type="evidence" value="ECO:0007669"/>
    <property type="project" value="UniProtKB-UniPathway"/>
</dbReference>
<dbReference type="Gene3D" id="3.40.50.1820">
    <property type="entry name" value="alpha/beta hydrolase"/>
    <property type="match status" value="1"/>
</dbReference>
<dbReference type="InterPro" id="IPR029058">
    <property type="entry name" value="AB_hydrolase_fold"/>
</dbReference>
<dbReference type="InterPro" id="IPR008391">
    <property type="entry name" value="AXE1_dom"/>
</dbReference>
<dbReference type="InterPro" id="IPR039069">
    <property type="entry name" value="CE7"/>
</dbReference>
<dbReference type="PANTHER" id="PTHR40111">
    <property type="entry name" value="CEPHALOSPORIN-C DEACETYLASE"/>
    <property type="match status" value="1"/>
</dbReference>
<dbReference type="PANTHER" id="PTHR40111:SF1">
    <property type="entry name" value="CEPHALOSPORIN-C DEACETYLASE"/>
    <property type="match status" value="1"/>
</dbReference>
<dbReference type="Pfam" id="PF05448">
    <property type="entry name" value="AXE1"/>
    <property type="match status" value="1"/>
</dbReference>
<dbReference type="SUPFAM" id="SSF53474">
    <property type="entry name" value="alpha/beta-Hydrolases"/>
    <property type="match status" value="1"/>
</dbReference>
<gene>
    <name evidence="5" type="primary">axe7A</name>
    <name type="ordered locus">PRU_2678</name>
</gene>
<keyword id="KW-0119">Carbohydrate metabolism</keyword>
<keyword id="KW-0378">Hydrolase</keyword>
<keyword id="KW-0624">Polysaccharide degradation</keyword>
<keyword id="KW-1185">Reference proteome</keyword>
<keyword id="KW-0719">Serine esterase</keyword>
<keyword id="KW-0732">Signal</keyword>
<keyword id="KW-0858">Xylan degradation</keyword>
<organism>
    <name type="scientific">Xylanibacter ruminicola (strain ATCC 19189 / DSM 19721 / CIP 105475 / JCM 8958 / 23)</name>
    <name type="common">Prevotella ruminicola</name>
    <dbReference type="NCBI Taxonomy" id="264731"/>
    <lineage>
        <taxon>Bacteria</taxon>
        <taxon>Pseudomonadati</taxon>
        <taxon>Bacteroidota</taxon>
        <taxon>Bacteroidia</taxon>
        <taxon>Bacteroidales</taxon>
        <taxon>Prevotellaceae</taxon>
        <taxon>Xylanibacter</taxon>
    </lineage>
</organism>
<accession>D5EXI2</accession>
<comment type="function">
    <text evidence="4">Involved in degradation of plant cell wall polysaccharides. Has acetyl esterase activity towards a broad range of substrates including xylose-tetraacetate, 4-O-methylumbelliferyl acetate, glucose-pentaacetate, cephalosporin C, and acetylated xylo-oligosaccharides smaller than xylo-heptaose. Displays no detectable activity on polymeric acetylated xylan.</text>
</comment>
<comment type="biophysicochemical properties">
    <phDependence>
        <text evidence="4">Optimum pH is 6.0 with glucose-pentaacetate as substrate. Active from pH 5.0 to 8.0.</text>
    </phDependence>
    <temperatureDependence>
        <text evidence="4">Optimum temperature is 40 degrees Celsius with glucose-pentaacetate as substrate. Active from 30 to 50 degrees Celsius. At temperatures of 30 degrees Celsius and lower, less than 10% of the maximum activity is left. At 50 degrees Celsius, retains 60% of its maximum activity.</text>
    </temperatureDependence>
</comment>
<comment type="pathway">
    <text evidence="4">Glycan degradation; xylan degradation.</text>
</comment>
<comment type="similarity">
    <text evidence="6">Belongs to the carbohydrate esterase 7 family.</text>
</comment>
<name>AXE7A_XYLR2</name>
<sequence>MFNFAPKQTTEMKKLLFTLVFVLGSMATALAENYPYRADYLWLTVPNHADWLYKTGERAKVEVSFCLYGMPQNVEVAYEIGPDMMPATSSGKVTLKNGRAVIDMGTMKKPGFLDMRLSVDGKYQHHVKVGFSPELLKPYTKNPQDFDAFWKANLDEARKTPVSVSCNKVDKYTTDAFDCYLLKIKTDRRHSIYGYLTKPKKAGKYPVVLCPPGAGIKTIKEPMRSTFYAKNGFIRLEMEIHGLNPEMTDEQFKEITTAFDYENGYLTNGLDDRDNYYMKHVYVACVRAIDYLTSLPDWDGKNVFVQGGSQGGALSLVTAGLDPRVTACVANHPALSDMAGYLDNRAGGYPHFNRLKNMFTPEKVNTMAYYDVVNFARRITCPVYITWGYNDNVCPPTTSYIVWNLITAPKESLITPINEHWTTSETNYTQMLWLKKQVK</sequence>